<reference key="1">
    <citation type="journal article" date="1998" name="Science">
        <title>Genome sequence of the nematode C. elegans: a platform for investigating biology.</title>
        <authorList>
            <consortium name="The C. elegans sequencing consortium"/>
        </authorList>
    </citation>
    <scope>NUCLEOTIDE SEQUENCE [LARGE SCALE GENOMIC DNA]</scope>
    <source>
        <strain>Bristol N2</strain>
    </source>
</reference>
<comment type="subcellular location">
    <subcellularLocation>
        <location evidence="2">Membrane</location>
        <topology evidence="2">Multi-pass membrane protein</topology>
    </subcellularLocation>
</comment>
<comment type="similarity">
    <text evidence="2">Belongs to the nematode receptor-like protein sra family.</text>
</comment>
<accession>O62367</accession>
<name>SRA23_CAEEL</name>
<protein>
    <recommendedName>
        <fullName>Serpentine receptor class alpha-23</fullName>
        <shortName>Protein sra-23</shortName>
    </recommendedName>
</protein>
<gene>
    <name type="primary">sra-23</name>
    <name type="ORF">T06G6.1</name>
</gene>
<dbReference type="EMBL" id="Z81587">
    <property type="protein sequence ID" value="CAB04701.1"/>
    <property type="molecule type" value="Genomic_DNA"/>
</dbReference>
<dbReference type="PIR" id="T24615">
    <property type="entry name" value="T24615"/>
</dbReference>
<dbReference type="RefSeq" id="NP_493219.1">
    <property type="nucleotide sequence ID" value="NM_060818.1"/>
</dbReference>
<dbReference type="FunCoup" id="O62367">
    <property type="interactions" value="9"/>
</dbReference>
<dbReference type="PaxDb" id="6239-T06G6.1"/>
<dbReference type="EnsemblMetazoa" id="T06G6.1.1">
    <property type="protein sequence ID" value="T06G6.1.1"/>
    <property type="gene ID" value="WBGene00005049"/>
</dbReference>
<dbReference type="GeneID" id="188194"/>
<dbReference type="KEGG" id="cel:CELE_T06G6.1"/>
<dbReference type="UCSC" id="T06G6.1">
    <property type="organism name" value="c. elegans"/>
</dbReference>
<dbReference type="AGR" id="WB:WBGene00005049"/>
<dbReference type="CTD" id="188194"/>
<dbReference type="WormBase" id="T06G6.1">
    <property type="protein sequence ID" value="CE13333"/>
    <property type="gene ID" value="WBGene00005049"/>
    <property type="gene designation" value="sra-23"/>
</dbReference>
<dbReference type="eggNOG" id="ENOG502THAY">
    <property type="taxonomic scope" value="Eukaryota"/>
</dbReference>
<dbReference type="GeneTree" id="ENSGT00970000195862"/>
<dbReference type="HOGENOM" id="CLU_070413_0_0_1"/>
<dbReference type="InParanoid" id="O62367"/>
<dbReference type="OrthoDB" id="5855692at2759"/>
<dbReference type="PhylomeDB" id="O62367"/>
<dbReference type="PRO" id="PR:O62367"/>
<dbReference type="Proteomes" id="UP000001940">
    <property type="component" value="Chromosome I"/>
</dbReference>
<dbReference type="GO" id="GO:0016020">
    <property type="term" value="C:membrane"/>
    <property type="evidence" value="ECO:0007669"/>
    <property type="project" value="UniProtKB-SubCell"/>
</dbReference>
<dbReference type="GO" id="GO:0004930">
    <property type="term" value="F:G protein-coupled receptor activity"/>
    <property type="evidence" value="ECO:0007669"/>
    <property type="project" value="InterPro"/>
</dbReference>
<dbReference type="GO" id="GO:0007606">
    <property type="term" value="P:sensory perception of chemical stimulus"/>
    <property type="evidence" value="ECO:0007669"/>
    <property type="project" value="InterPro"/>
</dbReference>
<dbReference type="InterPro" id="IPR000344">
    <property type="entry name" value="7TM_GPCR_serpentine_rcpt_Sra"/>
</dbReference>
<dbReference type="PANTHER" id="PTHR31582:SF2">
    <property type="entry name" value="G-PROTEIN COUPLED RECEPTORS FAMILY 1 PROFILE DOMAIN-CONTAINING PROTEIN-RELATED"/>
    <property type="match status" value="1"/>
</dbReference>
<dbReference type="PANTHER" id="PTHR31582">
    <property type="entry name" value="SERPENTINE RECEPTOR, CLASS A (ALPHA)-RELATED-RELATED"/>
    <property type="match status" value="1"/>
</dbReference>
<dbReference type="Pfam" id="PF02117">
    <property type="entry name" value="7TM_GPCR_Sra"/>
    <property type="match status" value="1"/>
</dbReference>
<dbReference type="PRINTS" id="PR00697">
    <property type="entry name" value="TMPROTEINSRA"/>
</dbReference>
<organism>
    <name type="scientific">Caenorhabditis elegans</name>
    <dbReference type="NCBI Taxonomy" id="6239"/>
    <lineage>
        <taxon>Eukaryota</taxon>
        <taxon>Metazoa</taxon>
        <taxon>Ecdysozoa</taxon>
        <taxon>Nematoda</taxon>
        <taxon>Chromadorea</taxon>
        <taxon>Rhabditida</taxon>
        <taxon>Rhabditina</taxon>
        <taxon>Rhabditomorpha</taxon>
        <taxon>Rhabditoidea</taxon>
        <taxon>Rhabditidae</taxon>
        <taxon>Peloderinae</taxon>
        <taxon>Caenorhabditis</taxon>
    </lineage>
</organism>
<sequence length="340" mass="38821">MNKTAEELLDSLKCASDGLASALTSVTLKFNCAFISTIVLISYCFSWLAIQALWNNNIFSNSTRLILIVCLLNSVVHQTTVMETRITQIYRSIVFASEPCEILFRSSECEIELYFYYLTNYFSTYSVFSLTFDRLISHYKSKYYHMHQYFIAISLLVLQFLLAILSFYIAYHGVPLAGYVPMCNYYPKMAVHHITINDVRTVVMVSCIIVTGFAYYLSVKSEKQIQKCSYSPGERYSAYENVTTSQSVCILIVLQFSCTMISSFGVNLLLMMQEAVSEETFTKVGAFLPGVAYANLCLPLAIYFKTKLTIQNRKLRIAVMISMYGDVGEHIARLKKSWEY</sequence>
<evidence type="ECO:0000255" key="1"/>
<evidence type="ECO:0000305" key="2"/>
<proteinExistence type="inferred from homology"/>
<feature type="chain" id="PRO_0000104485" description="Serpentine receptor class alpha-23">
    <location>
        <begin position="1"/>
        <end position="340"/>
    </location>
</feature>
<feature type="transmembrane region" description="Helical" evidence="1">
    <location>
        <begin position="34"/>
        <end position="54"/>
    </location>
</feature>
<feature type="transmembrane region" description="Helical" evidence="1">
    <location>
        <begin position="114"/>
        <end position="136"/>
    </location>
</feature>
<feature type="transmembrane region" description="Helical" evidence="1">
    <location>
        <begin position="150"/>
        <end position="170"/>
    </location>
</feature>
<feature type="transmembrane region" description="Helical" evidence="1">
    <location>
        <begin position="199"/>
        <end position="219"/>
    </location>
</feature>
<feature type="transmembrane region" description="Helical" evidence="1">
    <location>
        <begin position="250"/>
        <end position="270"/>
    </location>
</feature>
<feature type="transmembrane region" description="Helical" evidence="1">
    <location>
        <begin position="284"/>
        <end position="304"/>
    </location>
</feature>
<keyword id="KW-0472">Membrane</keyword>
<keyword id="KW-1185">Reference proteome</keyword>
<keyword id="KW-0812">Transmembrane</keyword>
<keyword id="KW-1133">Transmembrane helix</keyword>